<keyword id="KW-1185">Reference proteome</keyword>
<accession>P37504</accession>
<sequence length="148" mass="17003">MNIKRITTEADLHEALKIRRGVFIEEQHVSEADEFDEFDTLQEQCQHILVYHENQPVGTGRARIVGHTAKLERICILKPYRKYGLGKIIVSGLEEIMKEKGLTSYKLHGQTQAAGFYQKLGYQISSQEFMEDGIPHVLMTKEISRNIT</sequence>
<gene>
    <name type="primary">yyaT</name>
    <name type="ordered locus">BSU40720</name>
</gene>
<reference key="1">
    <citation type="journal article" date="1994" name="DNA Res.">
        <title>Systematic sequencing of the 180 kilobase region of the Bacillus subtilis chromosome containing the replication origin.</title>
        <authorList>
            <person name="Ogasawara N."/>
            <person name="Nakai S."/>
            <person name="Yoshikawa H."/>
        </authorList>
    </citation>
    <scope>NUCLEOTIDE SEQUENCE [GENOMIC DNA]</scope>
    <source>
        <strain>168</strain>
    </source>
</reference>
<reference key="2">
    <citation type="journal article" date="1997" name="Nature">
        <title>The complete genome sequence of the Gram-positive bacterium Bacillus subtilis.</title>
        <authorList>
            <person name="Kunst F."/>
            <person name="Ogasawara N."/>
            <person name="Moszer I."/>
            <person name="Albertini A.M."/>
            <person name="Alloni G."/>
            <person name="Azevedo V."/>
            <person name="Bertero M.G."/>
            <person name="Bessieres P."/>
            <person name="Bolotin A."/>
            <person name="Borchert S."/>
            <person name="Borriss R."/>
            <person name="Boursier L."/>
            <person name="Brans A."/>
            <person name="Braun M."/>
            <person name="Brignell S.C."/>
            <person name="Bron S."/>
            <person name="Brouillet S."/>
            <person name="Bruschi C.V."/>
            <person name="Caldwell B."/>
            <person name="Capuano V."/>
            <person name="Carter N.M."/>
            <person name="Choi S.-K."/>
            <person name="Codani J.-J."/>
            <person name="Connerton I.F."/>
            <person name="Cummings N.J."/>
            <person name="Daniel R.A."/>
            <person name="Denizot F."/>
            <person name="Devine K.M."/>
            <person name="Duesterhoeft A."/>
            <person name="Ehrlich S.D."/>
            <person name="Emmerson P.T."/>
            <person name="Entian K.-D."/>
            <person name="Errington J."/>
            <person name="Fabret C."/>
            <person name="Ferrari E."/>
            <person name="Foulger D."/>
            <person name="Fritz C."/>
            <person name="Fujita M."/>
            <person name="Fujita Y."/>
            <person name="Fuma S."/>
            <person name="Galizzi A."/>
            <person name="Galleron N."/>
            <person name="Ghim S.-Y."/>
            <person name="Glaser P."/>
            <person name="Goffeau A."/>
            <person name="Golightly E.J."/>
            <person name="Grandi G."/>
            <person name="Guiseppi G."/>
            <person name="Guy B.J."/>
            <person name="Haga K."/>
            <person name="Haiech J."/>
            <person name="Harwood C.R."/>
            <person name="Henaut A."/>
            <person name="Hilbert H."/>
            <person name="Holsappel S."/>
            <person name="Hosono S."/>
            <person name="Hullo M.-F."/>
            <person name="Itaya M."/>
            <person name="Jones L.-M."/>
            <person name="Joris B."/>
            <person name="Karamata D."/>
            <person name="Kasahara Y."/>
            <person name="Klaerr-Blanchard M."/>
            <person name="Klein C."/>
            <person name="Kobayashi Y."/>
            <person name="Koetter P."/>
            <person name="Koningstein G."/>
            <person name="Krogh S."/>
            <person name="Kumano M."/>
            <person name="Kurita K."/>
            <person name="Lapidus A."/>
            <person name="Lardinois S."/>
            <person name="Lauber J."/>
            <person name="Lazarevic V."/>
            <person name="Lee S.-M."/>
            <person name="Levine A."/>
            <person name="Liu H."/>
            <person name="Masuda S."/>
            <person name="Mauel C."/>
            <person name="Medigue C."/>
            <person name="Medina N."/>
            <person name="Mellado R.P."/>
            <person name="Mizuno M."/>
            <person name="Moestl D."/>
            <person name="Nakai S."/>
            <person name="Noback M."/>
            <person name="Noone D."/>
            <person name="O'Reilly M."/>
            <person name="Ogawa K."/>
            <person name="Ogiwara A."/>
            <person name="Oudega B."/>
            <person name="Park S.-H."/>
            <person name="Parro V."/>
            <person name="Pohl T.M."/>
            <person name="Portetelle D."/>
            <person name="Porwollik S."/>
            <person name="Prescott A.M."/>
            <person name="Presecan E."/>
            <person name="Pujic P."/>
            <person name="Purnelle B."/>
            <person name="Rapoport G."/>
            <person name="Rey M."/>
            <person name="Reynolds S."/>
            <person name="Rieger M."/>
            <person name="Rivolta C."/>
            <person name="Rocha E."/>
            <person name="Roche B."/>
            <person name="Rose M."/>
            <person name="Sadaie Y."/>
            <person name="Sato T."/>
            <person name="Scanlan E."/>
            <person name="Schleich S."/>
            <person name="Schroeter R."/>
            <person name="Scoffone F."/>
            <person name="Sekiguchi J."/>
            <person name="Sekowska A."/>
            <person name="Seror S.J."/>
            <person name="Serror P."/>
            <person name="Shin B.-S."/>
            <person name="Soldo B."/>
            <person name="Sorokin A."/>
            <person name="Tacconi E."/>
            <person name="Takagi T."/>
            <person name="Takahashi H."/>
            <person name="Takemaru K."/>
            <person name="Takeuchi M."/>
            <person name="Tamakoshi A."/>
            <person name="Tanaka T."/>
            <person name="Terpstra P."/>
            <person name="Tognoni A."/>
            <person name="Tosato V."/>
            <person name="Uchiyama S."/>
            <person name="Vandenbol M."/>
            <person name="Vannier F."/>
            <person name="Vassarotti A."/>
            <person name="Viari A."/>
            <person name="Wambutt R."/>
            <person name="Wedler E."/>
            <person name="Wedler H."/>
            <person name="Weitzenegger T."/>
            <person name="Winters P."/>
            <person name="Wipat A."/>
            <person name="Yamamoto H."/>
            <person name="Yamane K."/>
            <person name="Yasumoto K."/>
            <person name="Yata K."/>
            <person name="Yoshida K."/>
            <person name="Yoshikawa H.-F."/>
            <person name="Zumstein E."/>
            <person name="Yoshikawa H."/>
            <person name="Danchin A."/>
        </authorList>
    </citation>
    <scope>NUCLEOTIDE SEQUENCE [LARGE SCALE GENOMIC DNA]</scope>
    <source>
        <strain>168</strain>
    </source>
</reference>
<evidence type="ECO:0000255" key="1">
    <source>
        <dbReference type="PROSITE-ProRule" id="PRU00532"/>
    </source>
</evidence>
<feature type="chain" id="PRO_0000050060" description="Uncharacterized protein YyaT">
    <location>
        <begin position="1"/>
        <end position="148"/>
    </location>
</feature>
<feature type="domain" description="N-acetyltransferase" evidence="1">
    <location>
        <begin position="1"/>
        <end position="144"/>
    </location>
</feature>
<proteinExistence type="predicted"/>
<dbReference type="EMBL" id="D26185">
    <property type="protein sequence ID" value="BAA05203.1"/>
    <property type="molecule type" value="Genomic_DNA"/>
</dbReference>
<dbReference type="EMBL" id="AL009126">
    <property type="protein sequence ID" value="CAB16109.1"/>
    <property type="molecule type" value="Genomic_DNA"/>
</dbReference>
<dbReference type="PIR" id="S65997">
    <property type="entry name" value="S65997"/>
</dbReference>
<dbReference type="RefSeq" id="NP_391952.1">
    <property type="nucleotide sequence ID" value="NC_000964.3"/>
</dbReference>
<dbReference type="RefSeq" id="WP_003243577.1">
    <property type="nucleotide sequence ID" value="NZ_OZ025638.1"/>
</dbReference>
<dbReference type="SMR" id="P37504"/>
<dbReference type="FunCoup" id="P37504">
    <property type="interactions" value="117"/>
</dbReference>
<dbReference type="STRING" id="224308.BSU40720"/>
<dbReference type="PaxDb" id="224308-BSU40720"/>
<dbReference type="EnsemblBacteria" id="CAB16109">
    <property type="protein sequence ID" value="CAB16109"/>
    <property type="gene ID" value="BSU_40720"/>
</dbReference>
<dbReference type="GeneID" id="937874"/>
<dbReference type="KEGG" id="bsu:BSU40720"/>
<dbReference type="PATRIC" id="fig|224308.179.peg.4414"/>
<dbReference type="eggNOG" id="COG2153">
    <property type="taxonomic scope" value="Bacteria"/>
</dbReference>
<dbReference type="InParanoid" id="P37504"/>
<dbReference type="OrthoDB" id="9796171at2"/>
<dbReference type="PhylomeDB" id="P37504"/>
<dbReference type="BioCyc" id="BSUB:BSU40720-MONOMER"/>
<dbReference type="Proteomes" id="UP000001570">
    <property type="component" value="Chromosome"/>
</dbReference>
<dbReference type="GO" id="GO:0008080">
    <property type="term" value="F:N-acetyltransferase activity"/>
    <property type="evidence" value="ECO:0000318"/>
    <property type="project" value="GO_Central"/>
</dbReference>
<dbReference type="CDD" id="cd04301">
    <property type="entry name" value="NAT_SF"/>
    <property type="match status" value="1"/>
</dbReference>
<dbReference type="Gene3D" id="3.40.630.30">
    <property type="match status" value="1"/>
</dbReference>
<dbReference type="InterPro" id="IPR016181">
    <property type="entry name" value="Acyl_CoA_acyltransferase"/>
</dbReference>
<dbReference type="InterPro" id="IPR000182">
    <property type="entry name" value="GNAT_dom"/>
</dbReference>
<dbReference type="InterPro" id="IPR039143">
    <property type="entry name" value="GNPNAT1-like"/>
</dbReference>
<dbReference type="PANTHER" id="PTHR13355:SF9">
    <property type="entry name" value="ACETYLTRANSFERASE BSU40680-RELATED"/>
    <property type="match status" value="1"/>
</dbReference>
<dbReference type="PANTHER" id="PTHR13355">
    <property type="entry name" value="GLUCOSAMINE 6-PHOSPHATE N-ACETYLTRANSFERASE"/>
    <property type="match status" value="1"/>
</dbReference>
<dbReference type="Pfam" id="PF13673">
    <property type="entry name" value="Acetyltransf_10"/>
    <property type="match status" value="1"/>
</dbReference>
<dbReference type="SUPFAM" id="SSF55729">
    <property type="entry name" value="Acyl-CoA N-acyltransferases (Nat)"/>
    <property type="match status" value="1"/>
</dbReference>
<dbReference type="PROSITE" id="PS51186">
    <property type="entry name" value="GNAT"/>
    <property type="match status" value="1"/>
</dbReference>
<protein>
    <recommendedName>
        <fullName>Uncharacterized protein YyaT</fullName>
    </recommendedName>
</protein>
<organism>
    <name type="scientific">Bacillus subtilis (strain 168)</name>
    <dbReference type="NCBI Taxonomy" id="224308"/>
    <lineage>
        <taxon>Bacteria</taxon>
        <taxon>Bacillati</taxon>
        <taxon>Bacillota</taxon>
        <taxon>Bacilli</taxon>
        <taxon>Bacillales</taxon>
        <taxon>Bacillaceae</taxon>
        <taxon>Bacillus</taxon>
    </lineage>
</organism>
<name>YYAT_BACSU</name>